<gene>
    <name evidence="1" type="primary">kefG</name>
    <name type="ordered locus">ECIAI39_3833</name>
</gene>
<reference key="1">
    <citation type="journal article" date="2009" name="PLoS Genet.">
        <title>Organised genome dynamics in the Escherichia coli species results in highly diverse adaptive paths.</title>
        <authorList>
            <person name="Touchon M."/>
            <person name="Hoede C."/>
            <person name="Tenaillon O."/>
            <person name="Barbe V."/>
            <person name="Baeriswyl S."/>
            <person name="Bidet P."/>
            <person name="Bingen E."/>
            <person name="Bonacorsi S."/>
            <person name="Bouchier C."/>
            <person name="Bouvet O."/>
            <person name="Calteau A."/>
            <person name="Chiapello H."/>
            <person name="Clermont O."/>
            <person name="Cruveiller S."/>
            <person name="Danchin A."/>
            <person name="Diard M."/>
            <person name="Dossat C."/>
            <person name="Karoui M.E."/>
            <person name="Frapy E."/>
            <person name="Garry L."/>
            <person name="Ghigo J.M."/>
            <person name="Gilles A.M."/>
            <person name="Johnson J."/>
            <person name="Le Bouguenec C."/>
            <person name="Lescat M."/>
            <person name="Mangenot S."/>
            <person name="Martinez-Jehanne V."/>
            <person name="Matic I."/>
            <person name="Nassif X."/>
            <person name="Oztas S."/>
            <person name="Petit M.A."/>
            <person name="Pichon C."/>
            <person name="Rouy Z."/>
            <person name="Ruf C.S."/>
            <person name="Schneider D."/>
            <person name="Tourret J."/>
            <person name="Vacherie B."/>
            <person name="Vallenet D."/>
            <person name="Medigue C."/>
            <person name="Rocha E.P.C."/>
            <person name="Denamur E."/>
        </authorList>
    </citation>
    <scope>NUCLEOTIDE SEQUENCE [LARGE SCALE GENOMIC DNA]</scope>
    <source>
        <strain>IAI39 / ExPEC</strain>
    </source>
</reference>
<organism>
    <name type="scientific">Escherichia coli O7:K1 (strain IAI39 / ExPEC)</name>
    <dbReference type="NCBI Taxonomy" id="585057"/>
    <lineage>
        <taxon>Bacteria</taxon>
        <taxon>Pseudomonadati</taxon>
        <taxon>Pseudomonadota</taxon>
        <taxon>Gammaproteobacteria</taxon>
        <taxon>Enterobacterales</taxon>
        <taxon>Enterobacteriaceae</taxon>
        <taxon>Escherichia</taxon>
    </lineage>
</organism>
<proteinExistence type="inferred from homology"/>
<sequence>MMSQPAKVLLLYAHPESQDSVANRVLLKPATQLSNVTVHDLYAHYPDFFIDIPREQALLREHEVIVFQHPLYTYSCPALLKEWLDRVLSRGFASGPGGNQLAGKYWRSVITTGEPESAYRYDALNRYPMSDVLRPFELAAGMCRMHWLSPIIIYWARRQSAQELASHARAYGDWLANPLSPGGR</sequence>
<dbReference type="EC" id="1.6.5.2" evidence="1"/>
<dbReference type="EMBL" id="CU928164">
    <property type="protein sequence ID" value="CAR19947.1"/>
    <property type="molecule type" value="Genomic_DNA"/>
</dbReference>
<dbReference type="RefSeq" id="YP_002409728.1">
    <property type="nucleotide sequence ID" value="NC_011750.1"/>
</dbReference>
<dbReference type="SMR" id="B7NMB9"/>
<dbReference type="STRING" id="585057.ECIAI39_3833"/>
<dbReference type="KEGG" id="ect:ECIAI39_3833"/>
<dbReference type="PATRIC" id="fig|585057.6.peg.3970"/>
<dbReference type="HOGENOM" id="CLU_058643_0_1_6"/>
<dbReference type="Proteomes" id="UP000000749">
    <property type="component" value="Chromosome"/>
</dbReference>
<dbReference type="GO" id="GO:0005886">
    <property type="term" value="C:plasma membrane"/>
    <property type="evidence" value="ECO:0007669"/>
    <property type="project" value="UniProtKB-SubCell"/>
</dbReference>
<dbReference type="GO" id="GO:0009055">
    <property type="term" value="F:electron transfer activity"/>
    <property type="evidence" value="ECO:0007669"/>
    <property type="project" value="TreeGrafter"/>
</dbReference>
<dbReference type="GO" id="GO:0010181">
    <property type="term" value="F:FMN binding"/>
    <property type="evidence" value="ECO:0007669"/>
    <property type="project" value="TreeGrafter"/>
</dbReference>
<dbReference type="GO" id="GO:0050136">
    <property type="term" value="F:NADH:ubiquinone reductase (non-electrogenic) activity"/>
    <property type="evidence" value="ECO:0007669"/>
    <property type="project" value="RHEA"/>
</dbReference>
<dbReference type="GO" id="GO:0008753">
    <property type="term" value="F:NADPH dehydrogenase (quinone) activity"/>
    <property type="evidence" value="ECO:0007669"/>
    <property type="project" value="RHEA"/>
</dbReference>
<dbReference type="GO" id="GO:1901381">
    <property type="term" value="P:positive regulation of potassium ion transmembrane transport"/>
    <property type="evidence" value="ECO:0007669"/>
    <property type="project" value="UniProtKB-UniRule"/>
</dbReference>
<dbReference type="GO" id="GO:0006813">
    <property type="term" value="P:potassium ion transport"/>
    <property type="evidence" value="ECO:0007669"/>
    <property type="project" value="InterPro"/>
</dbReference>
<dbReference type="FunFam" id="3.40.50.360:FF:000013">
    <property type="entry name" value="Glutathione-regulated potassium-efflux system ancillary protein KefG"/>
    <property type="match status" value="1"/>
</dbReference>
<dbReference type="Gene3D" id="3.40.50.360">
    <property type="match status" value="1"/>
</dbReference>
<dbReference type="HAMAP" id="MF_01415">
    <property type="entry name" value="K_H_efflux_KefG"/>
    <property type="match status" value="1"/>
</dbReference>
<dbReference type="InterPro" id="IPR003680">
    <property type="entry name" value="Flavodoxin_fold"/>
</dbReference>
<dbReference type="InterPro" id="IPR029039">
    <property type="entry name" value="Flavoprotein-like_sf"/>
</dbReference>
<dbReference type="InterPro" id="IPR023947">
    <property type="entry name" value="K_H_efflux_KefG"/>
</dbReference>
<dbReference type="InterPro" id="IPR046980">
    <property type="entry name" value="KefG/KefF"/>
</dbReference>
<dbReference type="NCBIfam" id="NF003430">
    <property type="entry name" value="PRK04930.1"/>
    <property type="match status" value="1"/>
</dbReference>
<dbReference type="PANTHER" id="PTHR47307">
    <property type="entry name" value="GLUTATHIONE-REGULATED POTASSIUM-EFFLUX SYSTEM ANCILLARY PROTEIN KEFG"/>
    <property type="match status" value="1"/>
</dbReference>
<dbReference type="PANTHER" id="PTHR47307:SF1">
    <property type="entry name" value="GLUTATHIONE-REGULATED POTASSIUM-EFFLUX SYSTEM ANCILLARY PROTEIN KEFG"/>
    <property type="match status" value="1"/>
</dbReference>
<dbReference type="Pfam" id="PF02525">
    <property type="entry name" value="Flavodoxin_2"/>
    <property type="match status" value="1"/>
</dbReference>
<dbReference type="SUPFAM" id="SSF52218">
    <property type="entry name" value="Flavoproteins"/>
    <property type="match status" value="1"/>
</dbReference>
<accession>B7NMB9</accession>
<evidence type="ECO:0000255" key="1">
    <source>
        <dbReference type="HAMAP-Rule" id="MF_01415"/>
    </source>
</evidence>
<comment type="function">
    <text evidence="1">Regulatory subunit of a potassium efflux system that confers protection against electrophiles. Required for full activity of KefB.</text>
</comment>
<comment type="catalytic activity">
    <reaction evidence="1">
        <text>a quinone + NADH + H(+) = a quinol + NAD(+)</text>
        <dbReference type="Rhea" id="RHEA:46160"/>
        <dbReference type="ChEBI" id="CHEBI:15378"/>
        <dbReference type="ChEBI" id="CHEBI:24646"/>
        <dbReference type="ChEBI" id="CHEBI:57540"/>
        <dbReference type="ChEBI" id="CHEBI:57945"/>
        <dbReference type="ChEBI" id="CHEBI:132124"/>
        <dbReference type="EC" id="1.6.5.2"/>
    </reaction>
</comment>
<comment type="catalytic activity">
    <reaction evidence="1">
        <text>a quinone + NADPH + H(+) = a quinol + NADP(+)</text>
        <dbReference type="Rhea" id="RHEA:46164"/>
        <dbReference type="ChEBI" id="CHEBI:15378"/>
        <dbReference type="ChEBI" id="CHEBI:24646"/>
        <dbReference type="ChEBI" id="CHEBI:57783"/>
        <dbReference type="ChEBI" id="CHEBI:58349"/>
        <dbReference type="ChEBI" id="CHEBI:132124"/>
        <dbReference type="EC" id="1.6.5.2"/>
    </reaction>
</comment>
<comment type="subunit">
    <text evidence="1">Interacts with KefB.</text>
</comment>
<comment type="subcellular location">
    <subcellularLocation>
        <location evidence="1">Cell inner membrane</location>
        <topology evidence="1">Peripheral membrane protein</topology>
        <orientation evidence="1">Cytoplasmic side</orientation>
    </subcellularLocation>
</comment>
<comment type="similarity">
    <text evidence="1">Belongs to the NAD(P)H dehydrogenase (quinone) family. KefG subfamily.</text>
</comment>
<name>KEFG_ECO7I</name>
<feature type="chain" id="PRO_1000145573" description="Glutathione-regulated potassium-efflux system ancillary protein KefG">
    <location>
        <begin position="1"/>
        <end position="184"/>
    </location>
</feature>
<keyword id="KW-0997">Cell inner membrane</keyword>
<keyword id="KW-1003">Cell membrane</keyword>
<keyword id="KW-0472">Membrane</keyword>
<keyword id="KW-0520">NAD</keyword>
<keyword id="KW-0560">Oxidoreductase</keyword>
<protein>
    <recommendedName>
        <fullName evidence="1">Glutathione-regulated potassium-efflux system ancillary protein KefG</fullName>
    </recommendedName>
    <alternativeName>
        <fullName evidence="1">Putative quinone oxidoreductase KefG</fullName>
        <ecNumber evidence="1">1.6.5.2</ecNumber>
    </alternativeName>
</protein>